<feature type="chain" id="PRO_0000098253" description="DNA translocase FtsK">
    <location>
        <begin position="1"/>
        <end position="743"/>
    </location>
</feature>
<feature type="transmembrane region" description="Helical" evidence="2">
    <location>
        <begin position="14"/>
        <end position="34"/>
    </location>
</feature>
<feature type="transmembrane region" description="Helical" evidence="2">
    <location>
        <begin position="48"/>
        <end position="68"/>
    </location>
</feature>
<feature type="transmembrane region" description="Helical" evidence="2">
    <location>
        <begin position="84"/>
        <end position="104"/>
    </location>
</feature>
<feature type="transmembrane region" description="Helical" evidence="2">
    <location>
        <begin position="124"/>
        <end position="144"/>
    </location>
</feature>
<feature type="transmembrane region" description="Helical" evidence="2">
    <location>
        <begin position="146"/>
        <end position="166"/>
    </location>
</feature>
<feature type="topological domain" description="Cytoplasmic" evidence="2">
    <location>
        <begin position="167"/>
        <end position="743"/>
    </location>
</feature>
<feature type="domain" description="FtsK" evidence="3">
    <location>
        <begin position="411"/>
        <end position="602"/>
    </location>
</feature>
<feature type="binding site" evidence="3">
    <location>
        <begin position="431"/>
        <end position="436"/>
    </location>
    <ligand>
        <name>ATP</name>
        <dbReference type="ChEBI" id="CHEBI:30616"/>
    </ligand>
</feature>
<name>FTSK_CLOTE</name>
<evidence type="ECO:0000250" key="1"/>
<evidence type="ECO:0000255" key="2"/>
<evidence type="ECO:0000255" key="3">
    <source>
        <dbReference type="PROSITE-ProRule" id="PRU00289"/>
    </source>
</evidence>
<evidence type="ECO:0000305" key="4"/>
<proteinExistence type="inferred from homology"/>
<organism>
    <name type="scientific">Clostridium tetani (strain Massachusetts / E88)</name>
    <dbReference type="NCBI Taxonomy" id="212717"/>
    <lineage>
        <taxon>Bacteria</taxon>
        <taxon>Bacillati</taxon>
        <taxon>Bacillota</taxon>
        <taxon>Clostridia</taxon>
        <taxon>Eubacteriales</taxon>
        <taxon>Clostridiaceae</taxon>
        <taxon>Clostridium</taxon>
    </lineage>
</organism>
<keyword id="KW-0067">ATP-binding</keyword>
<keyword id="KW-0131">Cell cycle</keyword>
<keyword id="KW-0132">Cell division</keyword>
<keyword id="KW-1003">Cell membrane</keyword>
<keyword id="KW-0159">Chromosome partition</keyword>
<keyword id="KW-0238">DNA-binding</keyword>
<keyword id="KW-0472">Membrane</keyword>
<keyword id="KW-0547">Nucleotide-binding</keyword>
<keyword id="KW-1185">Reference proteome</keyword>
<keyword id="KW-0812">Transmembrane</keyword>
<keyword id="KW-1133">Transmembrane helix</keyword>
<accession>Q895I8</accession>
<comment type="function">
    <text evidence="1">Essential cell division protein that coordinates cell division and chromosome segregation. The N-terminus is involved in assembly of the cell-division machinery. The C-terminus functions as a DNA motor that moves dsDNA in an ATP-dependent manner towards the dif recombination site, which is located within the replication terminus region. Required for activation of the Xer recombinase, allowing activation of chromosome unlinking by recombination (By similarity).</text>
</comment>
<comment type="subunit">
    <text evidence="1">Homohexamer. Forms a ring that surrounds DNA (By similarity).</text>
</comment>
<comment type="subcellular location">
    <subcellularLocation>
        <location evidence="1">Cell membrane</location>
        <topology evidence="1">Multi-pass membrane protein</topology>
    </subcellularLocation>
    <text evidence="1">Located at the septum.</text>
</comment>
<comment type="domain">
    <text evidence="1">Consists of an N-terminal domain, which is sufficient for the localization to the septal ring and is required for cell division, followed by a linker domain, and a C-terminal domain, which forms the translocation motor involved in chromosome segregation. The C-terminal domain can be further subdivided into alpha, beta and gamma subdomains. The alpha and beta subdomains form the DNA pump, and the gamma subdomain is a regulatory subdomain (By similarity).</text>
</comment>
<comment type="similarity">
    <text evidence="4">Belongs to the FtsK/SpoIIIE/SftA family.</text>
</comment>
<protein>
    <recommendedName>
        <fullName>DNA translocase FtsK</fullName>
    </recommendedName>
</protein>
<gene>
    <name type="primary">ftsK</name>
    <name type="ordered locus">CTC_01286</name>
</gene>
<sequence>MAKKKKQKTIKLDAEIKGILFITIGVLSLISIMSSSNSGIIGKMSKKILVFIFGLGAFIFPFFIIFVGVCLILKKGKVTYSGKFYGIVLFILNTLFCLHIGDIVTKGLDRSFFQGIVDIYNSETFLHGGVISYIVDLPLYKLFGKWGTFVIFISIYVICFILISQISLYSIISKFKLKKEKRRKEKNIEIKEDVQDEVKFTEIKDSEEIPEEKIINRIKIIDFIKNTNIEENDDTKENKPIQKGKDSNNIQGEKDINKELEEEMSKAALKTIDYEFPSIDLLNDNKSIKLKKEDKKELLNNANKLEETLTSFGVEAKVTQVTKGPSVTRFELQPSVGVKVSKIVHLADDIALNLAAQDVRIEAPIPGKSAVGIEVPNRELTPVYLKEVLDSNEFKNCNKNLAFAIGKDIAGNCVVSDLSKMPHLLIAGATGSGKSVCINTLIISLIYKYSPEDVKLLMVDPKVVELNIYNDIPHLLIPVVTEPKKAAGALYWAVNEMTRRYKLFAETNVRNIESYNELLKKGKGVEKLPLIVIVIDELADLMMVCPNDIEDYIGRLAQMARAAGMHLVIATQRPSVDVITGVIKANIPSRISFAVSSQIDSRTILDMGGAEKLLGKGDMLFYPSGESKPMRVQGAFISEEEVEKVVGFIKEKQCGEVEYEDSIIDEINTSIEINNEDRDELLEEAIKIVVDVDQASTSLLQRKLRIGYNRAARIMDQMEERGIISQKDGSKPRQVLISKDDIV</sequence>
<dbReference type="EMBL" id="AE015927">
    <property type="protein sequence ID" value="AAO35852.1"/>
    <property type="molecule type" value="Genomic_DNA"/>
</dbReference>
<dbReference type="RefSeq" id="WP_011099514.1">
    <property type="nucleotide sequence ID" value="NC_004557.1"/>
</dbReference>
<dbReference type="SMR" id="Q895I8"/>
<dbReference type="STRING" id="212717.CTC_01286"/>
<dbReference type="GeneID" id="24254465"/>
<dbReference type="KEGG" id="ctc:CTC_01286"/>
<dbReference type="HOGENOM" id="CLU_001981_9_2_9"/>
<dbReference type="OrthoDB" id="9807790at2"/>
<dbReference type="Proteomes" id="UP000001412">
    <property type="component" value="Chromosome"/>
</dbReference>
<dbReference type="GO" id="GO:0005886">
    <property type="term" value="C:plasma membrane"/>
    <property type="evidence" value="ECO:0007669"/>
    <property type="project" value="UniProtKB-SubCell"/>
</dbReference>
<dbReference type="GO" id="GO:0005524">
    <property type="term" value="F:ATP binding"/>
    <property type="evidence" value="ECO:0007669"/>
    <property type="project" value="UniProtKB-KW"/>
</dbReference>
<dbReference type="GO" id="GO:0016887">
    <property type="term" value="F:ATP hydrolysis activity"/>
    <property type="evidence" value="ECO:0007669"/>
    <property type="project" value="InterPro"/>
</dbReference>
<dbReference type="GO" id="GO:0003677">
    <property type="term" value="F:DNA binding"/>
    <property type="evidence" value="ECO:0007669"/>
    <property type="project" value="UniProtKB-KW"/>
</dbReference>
<dbReference type="GO" id="GO:0051301">
    <property type="term" value="P:cell division"/>
    <property type="evidence" value="ECO:0007669"/>
    <property type="project" value="UniProtKB-KW"/>
</dbReference>
<dbReference type="GO" id="GO:0007059">
    <property type="term" value="P:chromosome segregation"/>
    <property type="evidence" value="ECO:0007669"/>
    <property type="project" value="UniProtKB-KW"/>
</dbReference>
<dbReference type="CDD" id="cd01127">
    <property type="entry name" value="TrwB_TraG_TraD_VirD4"/>
    <property type="match status" value="1"/>
</dbReference>
<dbReference type="Gene3D" id="3.30.980.40">
    <property type="match status" value="1"/>
</dbReference>
<dbReference type="Gene3D" id="3.40.50.300">
    <property type="entry name" value="P-loop containing nucleotide triphosphate hydrolases"/>
    <property type="match status" value="1"/>
</dbReference>
<dbReference type="Gene3D" id="1.10.10.10">
    <property type="entry name" value="Winged helix-like DNA-binding domain superfamily/Winged helix DNA-binding domain"/>
    <property type="match status" value="1"/>
</dbReference>
<dbReference type="InterPro" id="IPR003593">
    <property type="entry name" value="AAA+_ATPase"/>
</dbReference>
<dbReference type="InterPro" id="IPR050206">
    <property type="entry name" value="FtsK/SpoIIIE/SftA"/>
</dbReference>
<dbReference type="InterPro" id="IPR041027">
    <property type="entry name" value="FtsK_alpha"/>
</dbReference>
<dbReference type="InterPro" id="IPR002543">
    <property type="entry name" value="FtsK_dom"/>
</dbReference>
<dbReference type="InterPro" id="IPR018541">
    <property type="entry name" value="Ftsk_gamma"/>
</dbReference>
<dbReference type="InterPro" id="IPR027417">
    <property type="entry name" value="P-loop_NTPase"/>
</dbReference>
<dbReference type="InterPro" id="IPR036388">
    <property type="entry name" value="WH-like_DNA-bd_sf"/>
</dbReference>
<dbReference type="InterPro" id="IPR036390">
    <property type="entry name" value="WH_DNA-bd_sf"/>
</dbReference>
<dbReference type="PANTHER" id="PTHR22683:SF41">
    <property type="entry name" value="DNA TRANSLOCASE FTSK"/>
    <property type="match status" value="1"/>
</dbReference>
<dbReference type="PANTHER" id="PTHR22683">
    <property type="entry name" value="SPORULATION PROTEIN RELATED"/>
    <property type="match status" value="1"/>
</dbReference>
<dbReference type="Pfam" id="PF17854">
    <property type="entry name" value="FtsK_alpha"/>
    <property type="match status" value="1"/>
</dbReference>
<dbReference type="Pfam" id="PF09397">
    <property type="entry name" value="FtsK_gamma"/>
    <property type="match status" value="1"/>
</dbReference>
<dbReference type="Pfam" id="PF01580">
    <property type="entry name" value="FtsK_SpoIIIE"/>
    <property type="match status" value="1"/>
</dbReference>
<dbReference type="SMART" id="SM00382">
    <property type="entry name" value="AAA"/>
    <property type="match status" value="1"/>
</dbReference>
<dbReference type="SMART" id="SM00843">
    <property type="entry name" value="Ftsk_gamma"/>
    <property type="match status" value="1"/>
</dbReference>
<dbReference type="SUPFAM" id="SSF52540">
    <property type="entry name" value="P-loop containing nucleoside triphosphate hydrolases"/>
    <property type="match status" value="1"/>
</dbReference>
<dbReference type="SUPFAM" id="SSF46785">
    <property type="entry name" value="Winged helix' DNA-binding domain"/>
    <property type="match status" value="1"/>
</dbReference>
<dbReference type="PROSITE" id="PS50901">
    <property type="entry name" value="FTSK"/>
    <property type="match status" value="1"/>
</dbReference>
<reference key="1">
    <citation type="journal article" date="2003" name="Proc. Natl. Acad. Sci. U.S.A.">
        <title>The genome sequence of Clostridium tetani, the causative agent of tetanus disease.</title>
        <authorList>
            <person name="Brueggemann H."/>
            <person name="Baeumer S."/>
            <person name="Fricke W.F."/>
            <person name="Wiezer A."/>
            <person name="Liesegang H."/>
            <person name="Decker I."/>
            <person name="Herzberg C."/>
            <person name="Martinez-Arias R."/>
            <person name="Merkl R."/>
            <person name="Henne A."/>
            <person name="Gottschalk G."/>
        </authorList>
    </citation>
    <scope>NUCLEOTIDE SEQUENCE [LARGE SCALE GENOMIC DNA]</scope>
    <source>
        <strain>Massachusetts / E88</strain>
    </source>
</reference>